<proteinExistence type="inferred from homology"/>
<feature type="chain" id="PRO_1000026402" description="Fluoride-specific ion channel FluC">
    <location>
        <begin position="1"/>
        <end position="128"/>
    </location>
</feature>
<feature type="transmembrane region" description="Helical" evidence="1">
    <location>
        <begin position="3"/>
        <end position="23"/>
    </location>
</feature>
<feature type="transmembrane region" description="Helical" evidence="1">
    <location>
        <begin position="34"/>
        <end position="54"/>
    </location>
</feature>
<feature type="transmembrane region" description="Helical" evidence="1">
    <location>
        <begin position="69"/>
        <end position="89"/>
    </location>
</feature>
<feature type="transmembrane region" description="Helical" evidence="1">
    <location>
        <begin position="100"/>
        <end position="120"/>
    </location>
</feature>
<feature type="binding site" evidence="1">
    <location>
        <position position="75"/>
    </location>
    <ligand>
        <name>Na(+)</name>
        <dbReference type="ChEBI" id="CHEBI:29101"/>
        <note>structural</note>
    </ligand>
</feature>
<feature type="binding site" evidence="1">
    <location>
        <position position="78"/>
    </location>
    <ligand>
        <name>Na(+)</name>
        <dbReference type="ChEBI" id="CHEBI:29101"/>
        <note>structural</note>
    </ligand>
</feature>
<gene>
    <name evidence="1" type="primary">fluC</name>
    <name evidence="1" type="synonym">crcB</name>
    <name type="ordered locus">NIS_1374</name>
</gene>
<evidence type="ECO:0000255" key="1">
    <source>
        <dbReference type="HAMAP-Rule" id="MF_00454"/>
    </source>
</evidence>
<dbReference type="EMBL" id="AP009178">
    <property type="protein sequence ID" value="BAF70482.1"/>
    <property type="molecule type" value="Genomic_DNA"/>
</dbReference>
<dbReference type="RefSeq" id="WP_012082745.1">
    <property type="nucleotide sequence ID" value="NC_009662.1"/>
</dbReference>
<dbReference type="SMR" id="A6Q4S3"/>
<dbReference type="FunCoup" id="A6Q4S3">
    <property type="interactions" value="205"/>
</dbReference>
<dbReference type="STRING" id="387092.NIS_1374"/>
<dbReference type="KEGG" id="nis:NIS_1374"/>
<dbReference type="eggNOG" id="COG0239">
    <property type="taxonomic scope" value="Bacteria"/>
</dbReference>
<dbReference type="HOGENOM" id="CLU_114342_3_0_7"/>
<dbReference type="InParanoid" id="A6Q4S3"/>
<dbReference type="OrthoDB" id="9806299at2"/>
<dbReference type="Proteomes" id="UP000001118">
    <property type="component" value="Chromosome"/>
</dbReference>
<dbReference type="GO" id="GO:0005886">
    <property type="term" value="C:plasma membrane"/>
    <property type="evidence" value="ECO:0007669"/>
    <property type="project" value="UniProtKB-SubCell"/>
</dbReference>
<dbReference type="GO" id="GO:0062054">
    <property type="term" value="F:fluoride channel activity"/>
    <property type="evidence" value="ECO:0007669"/>
    <property type="project" value="UniProtKB-UniRule"/>
</dbReference>
<dbReference type="GO" id="GO:0046872">
    <property type="term" value="F:metal ion binding"/>
    <property type="evidence" value="ECO:0007669"/>
    <property type="project" value="UniProtKB-KW"/>
</dbReference>
<dbReference type="GO" id="GO:0140114">
    <property type="term" value="P:cellular detoxification of fluoride"/>
    <property type="evidence" value="ECO:0007669"/>
    <property type="project" value="UniProtKB-UniRule"/>
</dbReference>
<dbReference type="HAMAP" id="MF_00454">
    <property type="entry name" value="FluC"/>
    <property type="match status" value="1"/>
</dbReference>
<dbReference type="InterPro" id="IPR003691">
    <property type="entry name" value="FluC"/>
</dbReference>
<dbReference type="NCBIfam" id="TIGR00494">
    <property type="entry name" value="crcB"/>
    <property type="match status" value="1"/>
</dbReference>
<dbReference type="PANTHER" id="PTHR28259">
    <property type="entry name" value="FLUORIDE EXPORT PROTEIN 1-RELATED"/>
    <property type="match status" value="1"/>
</dbReference>
<dbReference type="PANTHER" id="PTHR28259:SF1">
    <property type="entry name" value="FLUORIDE EXPORT PROTEIN 1-RELATED"/>
    <property type="match status" value="1"/>
</dbReference>
<dbReference type="Pfam" id="PF02537">
    <property type="entry name" value="CRCB"/>
    <property type="match status" value="1"/>
</dbReference>
<comment type="function">
    <text evidence="1">Fluoride-specific ion channel. Important for reducing fluoride concentration in the cell, thus reducing its toxicity.</text>
</comment>
<comment type="catalytic activity">
    <reaction evidence="1">
        <text>fluoride(in) = fluoride(out)</text>
        <dbReference type="Rhea" id="RHEA:76159"/>
        <dbReference type="ChEBI" id="CHEBI:17051"/>
    </reaction>
    <physiologicalReaction direction="left-to-right" evidence="1">
        <dbReference type="Rhea" id="RHEA:76160"/>
    </physiologicalReaction>
</comment>
<comment type="activity regulation">
    <text evidence="1">Na(+) is not transported, but it plays an essential structural role and its presence is essential for fluoride channel function.</text>
</comment>
<comment type="subcellular location">
    <subcellularLocation>
        <location evidence="1">Cell inner membrane</location>
        <topology evidence="1">Multi-pass membrane protein</topology>
    </subcellularLocation>
</comment>
<comment type="similarity">
    <text evidence="1">Belongs to the fluoride channel Fluc/FEX (TC 1.A.43) family.</text>
</comment>
<reference key="1">
    <citation type="journal article" date="2007" name="Proc. Natl. Acad. Sci. U.S.A.">
        <title>Deep-sea vent epsilon-proteobacterial genomes provide insights into emergence of pathogens.</title>
        <authorList>
            <person name="Nakagawa S."/>
            <person name="Takaki Y."/>
            <person name="Shimamura S."/>
            <person name="Reysenbach A.-L."/>
            <person name="Takai K."/>
            <person name="Horikoshi K."/>
        </authorList>
    </citation>
    <scope>NUCLEOTIDE SEQUENCE [LARGE SCALE GENOMIC DNA]</scope>
    <source>
        <strain>SB155-2</strain>
    </source>
</reference>
<keyword id="KW-0997">Cell inner membrane</keyword>
<keyword id="KW-1003">Cell membrane</keyword>
<keyword id="KW-0407">Ion channel</keyword>
<keyword id="KW-0406">Ion transport</keyword>
<keyword id="KW-0472">Membrane</keyword>
<keyword id="KW-0479">Metal-binding</keyword>
<keyword id="KW-1185">Reference proteome</keyword>
<keyword id="KW-0915">Sodium</keyword>
<keyword id="KW-0812">Transmembrane</keyword>
<keyword id="KW-1133">Transmembrane helix</keyword>
<keyword id="KW-0813">Transport</keyword>
<sequence length="128" mass="14261">MNFSVIFAVGIGGFFGAISRFLIATWMQKITHSLFPVGTLTVNVLGSFIIGFLYMYFEQSINPIYKAMFITGFLGALTTFSTFSLETLLMIQDGLWIRAFLNILLNVILTISSTFAAIILFKKMYGGL</sequence>
<protein>
    <recommendedName>
        <fullName evidence="1">Fluoride-specific ion channel FluC</fullName>
    </recommendedName>
</protein>
<accession>A6Q4S3</accession>
<organism>
    <name type="scientific">Nitratiruptor sp. (strain SB155-2)</name>
    <dbReference type="NCBI Taxonomy" id="387092"/>
    <lineage>
        <taxon>Bacteria</taxon>
        <taxon>Pseudomonadati</taxon>
        <taxon>Campylobacterota</taxon>
        <taxon>Epsilonproteobacteria</taxon>
        <taxon>Nautiliales</taxon>
        <taxon>Nitratiruptoraceae</taxon>
        <taxon>Nitratiruptor</taxon>
    </lineage>
</organism>
<name>FLUC_NITSB</name>